<dbReference type="EC" id="4.2.1.59" evidence="1"/>
<dbReference type="EMBL" id="CP000267">
    <property type="protein sequence ID" value="ABD69724.1"/>
    <property type="molecule type" value="Genomic_DNA"/>
</dbReference>
<dbReference type="SMR" id="Q21WX9"/>
<dbReference type="STRING" id="338969.Rfer_1999"/>
<dbReference type="KEGG" id="rfr:Rfer_1999"/>
<dbReference type="eggNOG" id="COG0764">
    <property type="taxonomic scope" value="Bacteria"/>
</dbReference>
<dbReference type="HOGENOM" id="CLU_078912_1_0_4"/>
<dbReference type="Proteomes" id="UP000008332">
    <property type="component" value="Chromosome"/>
</dbReference>
<dbReference type="GO" id="GO:0005737">
    <property type="term" value="C:cytoplasm"/>
    <property type="evidence" value="ECO:0007669"/>
    <property type="project" value="UniProtKB-SubCell"/>
</dbReference>
<dbReference type="GO" id="GO:0016020">
    <property type="term" value="C:membrane"/>
    <property type="evidence" value="ECO:0007669"/>
    <property type="project" value="GOC"/>
</dbReference>
<dbReference type="GO" id="GO:0019171">
    <property type="term" value="F:(3R)-hydroxyacyl-[acyl-carrier-protein] dehydratase activity"/>
    <property type="evidence" value="ECO:0007669"/>
    <property type="project" value="UniProtKB-EC"/>
</dbReference>
<dbReference type="GO" id="GO:0006633">
    <property type="term" value="P:fatty acid biosynthetic process"/>
    <property type="evidence" value="ECO:0007669"/>
    <property type="project" value="UniProtKB-UniRule"/>
</dbReference>
<dbReference type="GO" id="GO:0009245">
    <property type="term" value="P:lipid A biosynthetic process"/>
    <property type="evidence" value="ECO:0007669"/>
    <property type="project" value="UniProtKB-UniRule"/>
</dbReference>
<dbReference type="CDD" id="cd01288">
    <property type="entry name" value="FabZ"/>
    <property type="match status" value="1"/>
</dbReference>
<dbReference type="FunFam" id="3.10.129.10:FF:000001">
    <property type="entry name" value="3-hydroxyacyl-[acyl-carrier-protein] dehydratase FabZ"/>
    <property type="match status" value="1"/>
</dbReference>
<dbReference type="Gene3D" id="3.10.129.10">
    <property type="entry name" value="Hotdog Thioesterase"/>
    <property type="match status" value="1"/>
</dbReference>
<dbReference type="HAMAP" id="MF_00406">
    <property type="entry name" value="FabZ"/>
    <property type="match status" value="1"/>
</dbReference>
<dbReference type="InterPro" id="IPR013114">
    <property type="entry name" value="FabA_FabZ"/>
</dbReference>
<dbReference type="InterPro" id="IPR010084">
    <property type="entry name" value="FabZ"/>
</dbReference>
<dbReference type="InterPro" id="IPR029069">
    <property type="entry name" value="HotDog_dom_sf"/>
</dbReference>
<dbReference type="NCBIfam" id="TIGR01750">
    <property type="entry name" value="fabZ"/>
    <property type="match status" value="1"/>
</dbReference>
<dbReference type="NCBIfam" id="NF000582">
    <property type="entry name" value="PRK00006.1"/>
    <property type="match status" value="1"/>
</dbReference>
<dbReference type="PANTHER" id="PTHR30272">
    <property type="entry name" value="3-HYDROXYACYL-[ACYL-CARRIER-PROTEIN] DEHYDRATASE"/>
    <property type="match status" value="1"/>
</dbReference>
<dbReference type="PANTHER" id="PTHR30272:SF1">
    <property type="entry name" value="3-HYDROXYACYL-[ACYL-CARRIER-PROTEIN] DEHYDRATASE"/>
    <property type="match status" value="1"/>
</dbReference>
<dbReference type="Pfam" id="PF07977">
    <property type="entry name" value="FabA"/>
    <property type="match status" value="1"/>
</dbReference>
<dbReference type="SUPFAM" id="SSF54637">
    <property type="entry name" value="Thioesterase/thiol ester dehydrase-isomerase"/>
    <property type="match status" value="1"/>
</dbReference>
<protein>
    <recommendedName>
        <fullName evidence="1">3-hydroxyacyl-[acyl-carrier-protein] dehydratase FabZ</fullName>
        <ecNumber evidence="1">4.2.1.59</ecNumber>
    </recommendedName>
    <alternativeName>
        <fullName evidence="1">(3R)-hydroxymyristoyl-[acyl-carrier-protein] dehydratase</fullName>
        <shortName evidence="1">(3R)-hydroxymyristoyl-ACP dehydrase</shortName>
    </alternativeName>
    <alternativeName>
        <fullName evidence="1">Beta-hydroxyacyl-ACP dehydratase</fullName>
    </alternativeName>
</protein>
<feature type="chain" id="PRO_0000242896" description="3-hydroxyacyl-[acyl-carrier-protein] dehydratase FabZ">
    <location>
        <begin position="1"/>
        <end position="150"/>
    </location>
</feature>
<feature type="active site" evidence="1">
    <location>
        <position position="52"/>
    </location>
</feature>
<keyword id="KW-0963">Cytoplasm</keyword>
<keyword id="KW-0441">Lipid A biosynthesis</keyword>
<keyword id="KW-0444">Lipid biosynthesis</keyword>
<keyword id="KW-0443">Lipid metabolism</keyword>
<keyword id="KW-0456">Lyase</keyword>
<keyword id="KW-1185">Reference proteome</keyword>
<comment type="function">
    <text evidence="1">Involved in unsaturated fatty acids biosynthesis. Catalyzes the dehydration of short chain beta-hydroxyacyl-ACPs and long chain saturated and unsaturated beta-hydroxyacyl-ACPs.</text>
</comment>
<comment type="catalytic activity">
    <reaction evidence="1">
        <text>a (3R)-hydroxyacyl-[ACP] = a (2E)-enoyl-[ACP] + H2O</text>
        <dbReference type="Rhea" id="RHEA:13097"/>
        <dbReference type="Rhea" id="RHEA-COMP:9925"/>
        <dbReference type="Rhea" id="RHEA-COMP:9945"/>
        <dbReference type="ChEBI" id="CHEBI:15377"/>
        <dbReference type="ChEBI" id="CHEBI:78784"/>
        <dbReference type="ChEBI" id="CHEBI:78827"/>
        <dbReference type="EC" id="4.2.1.59"/>
    </reaction>
</comment>
<comment type="subcellular location">
    <subcellularLocation>
        <location evidence="1">Cytoplasm</location>
    </subcellularLocation>
</comment>
<comment type="similarity">
    <text evidence="1">Belongs to the thioester dehydratase family. FabZ subfamily.</text>
</comment>
<evidence type="ECO:0000255" key="1">
    <source>
        <dbReference type="HAMAP-Rule" id="MF_00406"/>
    </source>
</evidence>
<gene>
    <name evidence="1" type="primary">fabZ</name>
    <name type="ordered locus">Rfer_1999</name>
</gene>
<sequence>MNRNTMDIYKILKQLPHRYPFLLVDRVLAIDKGKSIRAVKNVTINEPFFQGHFPYRPVMPGVLMLEALAQAAALLAFDAIDTTPDEDSVYYFAGMDGVRFKRPVEPGDQLILEVELVRMKAGIFKFKARALVDNELAVEAELTCAVRKIA</sequence>
<reference key="1">
    <citation type="submission" date="2006-02" db="EMBL/GenBank/DDBJ databases">
        <title>Complete sequence of chromosome of Rhodoferax ferrireducens DSM 15236.</title>
        <authorList>
            <person name="Copeland A."/>
            <person name="Lucas S."/>
            <person name="Lapidus A."/>
            <person name="Barry K."/>
            <person name="Detter J.C."/>
            <person name="Glavina del Rio T."/>
            <person name="Hammon N."/>
            <person name="Israni S."/>
            <person name="Pitluck S."/>
            <person name="Brettin T."/>
            <person name="Bruce D."/>
            <person name="Han C."/>
            <person name="Tapia R."/>
            <person name="Gilna P."/>
            <person name="Kiss H."/>
            <person name="Schmutz J."/>
            <person name="Larimer F."/>
            <person name="Land M."/>
            <person name="Kyrpides N."/>
            <person name="Ivanova N."/>
            <person name="Richardson P."/>
        </authorList>
    </citation>
    <scope>NUCLEOTIDE SEQUENCE [LARGE SCALE GENOMIC DNA]</scope>
    <source>
        <strain>ATCC BAA-621 / DSM 15236 / T118</strain>
    </source>
</reference>
<accession>Q21WX9</accession>
<proteinExistence type="inferred from homology"/>
<organism>
    <name type="scientific">Albidiferax ferrireducens (strain ATCC BAA-621 / DSM 15236 / T118)</name>
    <name type="common">Rhodoferax ferrireducens</name>
    <dbReference type="NCBI Taxonomy" id="338969"/>
    <lineage>
        <taxon>Bacteria</taxon>
        <taxon>Pseudomonadati</taxon>
        <taxon>Pseudomonadota</taxon>
        <taxon>Betaproteobacteria</taxon>
        <taxon>Burkholderiales</taxon>
        <taxon>Comamonadaceae</taxon>
        <taxon>Rhodoferax</taxon>
    </lineage>
</organism>
<name>FABZ_ALBFT</name>